<evidence type="ECO:0000255" key="1">
    <source>
        <dbReference type="HAMAP-Rule" id="MF_01341"/>
    </source>
</evidence>
<evidence type="ECO:0000256" key="2">
    <source>
        <dbReference type="SAM" id="MobiDB-lite"/>
    </source>
</evidence>
<evidence type="ECO:0000305" key="3"/>
<accession>B8ZKP9</accession>
<reference key="1">
    <citation type="journal article" date="2009" name="J. Bacteriol.">
        <title>Role of conjugative elements in the evolution of the multidrug-resistant pandemic clone Streptococcus pneumoniae Spain23F ST81.</title>
        <authorList>
            <person name="Croucher N.J."/>
            <person name="Walker D."/>
            <person name="Romero P."/>
            <person name="Lennard N."/>
            <person name="Paterson G.K."/>
            <person name="Bason N.C."/>
            <person name="Mitchell A.M."/>
            <person name="Quail M.A."/>
            <person name="Andrew P.W."/>
            <person name="Parkhill J."/>
            <person name="Bentley S.D."/>
            <person name="Mitchell T.J."/>
        </authorList>
    </citation>
    <scope>NUCLEOTIDE SEQUENCE [LARGE SCALE GENOMIC DNA]</scope>
    <source>
        <strain>ATCC 700669 / Spain 23F-1</strain>
    </source>
</reference>
<sequence>MKLHELKPAEGSRKVRNRVGRGTSSGNGKTSGRGQKGQKARSGGGVRLGFEGGQTPLFRRLPKRGFTNINAKEYAIVNLDQLNVFEDGAEVTPVVLIEAGIVKAEKSGIKILGNGELTKKLTVKAAKFSKSAEEAITAKGGSVEVI</sequence>
<protein>
    <recommendedName>
        <fullName evidence="1">Large ribosomal subunit protein uL15</fullName>
    </recommendedName>
    <alternativeName>
        <fullName evidence="3">50S ribosomal protein L15</fullName>
    </alternativeName>
</protein>
<gene>
    <name evidence="1" type="primary">rplO</name>
    <name type="ordered locus">SPN23F02180</name>
</gene>
<feature type="chain" id="PRO_1000166316" description="Large ribosomal subunit protein uL15">
    <location>
        <begin position="1"/>
        <end position="146"/>
    </location>
</feature>
<feature type="region of interest" description="Disordered" evidence="2">
    <location>
        <begin position="1"/>
        <end position="51"/>
    </location>
</feature>
<feature type="compositionally biased region" description="Basic and acidic residues" evidence="2">
    <location>
        <begin position="1"/>
        <end position="13"/>
    </location>
</feature>
<feature type="compositionally biased region" description="Gly residues" evidence="2">
    <location>
        <begin position="23"/>
        <end position="35"/>
    </location>
</feature>
<feature type="compositionally biased region" description="Gly residues" evidence="2">
    <location>
        <begin position="42"/>
        <end position="51"/>
    </location>
</feature>
<proteinExistence type="inferred from homology"/>
<dbReference type="EMBL" id="FM211187">
    <property type="protein sequence ID" value="CAR68078.1"/>
    <property type="molecule type" value="Genomic_DNA"/>
</dbReference>
<dbReference type="RefSeq" id="WP_000766087.1">
    <property type="nucleotide sequence ID" value="NC_011900.1"/>
</dbReference>
<dbReference type="SMR" id="B8ZKP9"/>
<dbReference type="GeneID" id="45652290"/>
<dbReference type="KEGG" id="sne:SPN23F02180"/>
<dbReference type="HOGENOM" id="CLU_055188_4_2_9"/>
<dbReference type="GO" id="GO:0022625">
    <property type="term" value="C:cytosolic large ribosomal subunit"/>
    <property type="evidence" value="ECO:0007669"/>
    <property type="project" value="TreeGrafter"/>
</dbReference>
<dbReference type="GO" id="GO:0019843">
    <property type="term" value="F:rRNA binding"/>
    <property type="evidence" value="ECO:0007669"/>
    <property type="project" value="UniProtKB-UniRule"/>
</dbReference>
<dbReference type="GO" id="GO:0003735">
    <property type="term" value="F:structural constituent of ribosome"/>
    <property type="evidence" value="ECO:0007669"/>
    <property type="project" value="InterPro"/>
</dbReference>
<dbReference type="GO" id="GO:0006412">
    <property type="term" value="P:translation"/>
    <property type="evidence" value="ECO:0007669"/>
    <property type="project" value="UniProtKB-UniRule"/>
</dbReference>
<dbReference type="FunFam" id="3.100.10.10:FF:000004">
    <property type="entry name" value="50S ribosomal protein L15"/>
    <property type="match status" value="1"/>
</dbReference>
<dbReference type="Gene3D" id="3.100.10.10">
    <property type="match status" value="1"/>
</dbReference>
<dbReference type="HAMAP" id="MF_01341">
    <property type="entry name" value="Ribosomal_uL15"/>
    <property type="match status" value="1"/>
</dbReference>
<dbReference type="InterPro" id="IPR030878">
    <property type="entry name" value="Ribosomal_uL15"/>
</dbReference>
<dbReference type="InterPro" id="IPR021131">
    <property type="entry name" value="Ribosomal_uL15/eL18"/>
</dbReference>
<dbReference type="InterPro" id="IPR036227">
    <property type="entry name" value="Ribosomal_uL15/eL18_sf"/>
</dbReference>
<dbReference type="InterPro" id="IPR005749">
    <property type="entry name" value="Ribosomal_uL15_bac-type"/>
</dbReference>
<dbReference type="InterPro" id="IPR001196">
    <property type="entry name" value="Ribosomal_uL15_CS"/>
</dbReference>
<dbReference type="NCBIfam" id="TIGR01071">
    <property type="entry name" value="rplO_bact"/>
    <property type="match status" value="1"/>
</dbReference>
<dbReference type="PANTHER" id="PTHR12934">
    <property type="entry name" value="50S RIBOSOMAL PROTEIN L15"/>
    <property type="match status" value="1"/>
</dbReference>
<dbReference type="PANTHER" id="PTHR12934:SF11">
    <property type="entry name" value="LARGE RIBOSOMAL SUBUNIT PROTEIN UL15M"/>
    <property type="match status" value="1"/>
</dbReference>
<dbReference type="Pfam" id="PF00828">
    <property type="entry name" value="Ribosomal_L27A"/>
    <property type="match status" value="1"/>
</dbReference>
<dbReference type="SUPFAM" id="SSF52080">
    <property type="entry name" value="Ribosomal proteins L15p and L18e"/>
    <property type="match status" value="1"/>
</dbReference>
<dbReference type="PROSITE" id="PS00475">
    <property type="entry name" value="RIBOSOMAL_L15"/>
    <property type="match status" value="1"/>
</dbReference>
<name>RL15_STRPJ</name>
<comment type="function">
    <text evidence="1">Binds to the 23S rRNA.</text>
</comment>
<comment type="subunit">
    <text evidence="1">Part of the 50S ribosomal subunit.</text>
</comment>
<comment type="similarity">
    <text evidence="1">Belongs to the universal ribosomal protein uL15 family.</text>
</comment>
<keyword id="KW-0687">Ribonucleoprotein</keyword>
<keyword id="KW-0689">Ribosomal protein</keyword>
<keyword id="KW-0694">RNA-binding</keyword>
<keyword id="KW-0699">rRNA-binding</keyword>
<organism>
    <name type="scientific">Streptococcus pneumoniae (strain ATCC 700669 / Spain 23F-1)</name>
    <dbReference type="NCBI Taxonomy" id="561276"/>
    <lineage>
        <taxon>Bacteria</taxon>
        <taxon>Bacillati</taxon>
        <taxon>Bacillota</taxon>
        <taxon>Bacilli</taxon>
        <taxon>Lactobacillales</taxon>
        <taxon>Streptococcaceae</taxon>
        <taxon>Streptococcus</taxon>
    </lineage>
</organism>